<keyword id="KW-0963">Cytoplasm</keyword>
<keyword id="KW-0489">Methyltransferase</keyword>
<keyword id="KW-0949">S-adenosyl-L-methionine</keyword>
<keyword id="KW-0808">Transferase</keyword>
<keyword id="KW-0819">tRNA processing</keyword>
<reference key="1">
    <citation type="submission" date="2008-10" db="EMBL/GenBank/DDBJ databases">
        <title>Genome sequence of Bacillus cereus AH820.</title>
        <authorList>
            <person name="Dodson R.J."/>
            <person name="Durkin A.S."/>
            <person name="Rosovitz M.J."/>
            <person name="Rasko D.A."/>
            <person name="Hoffmaster A."/>
            <person name="Ravel J."/>
            <person name="Sutton G."/>
        </authorList>
    </citation>
    <scope>NUCLEOTIDE SEQUENCE [LARGE SCALE GENOMIC DNA]</scope>
    <source>
        <strain>AH820</strain>
    </source>
</reference>
<gene>
    <name evidence="1" type="primary">trmD</name>
    <name type="ordered locus">BCAH820_3854</name>
</gene>
<organism>
    <name type="scientific">Bacillus cereus (strain AH820)</name>
    <dbReference type="NCBI Taxonomy" id="405535"/>
    <lineage>
        <taxon>Bacteria</taxon>
        <taxon>Bacillati</taxon>
        <taxon>Bacillota</taxon>
        <taxon>Bacilli</taxon>
        <taxon>Bacillales</taxon>
        <taxon>Bacillaceae</taxon>
        <taxon>Bacillus</taxon>
        <taxon>Bacillus cereus group</taxon>
    </lineage>
</organism>
<accession>B7JJS7</accession>
<proteinExistence type="inferred from homology"/>
<name>TRMD_BACC0</name>
<dbReference type="EC" id="2.1.1.228" evidence="1"/>
<dbReference type="EMBL" id="CP001283">
    <property type="protein sequence ID" value="ACK87696.1"/>
    <property type="molecule type" value="Genomic_DNA"/>
</dbReference>
<dbReference type="RefSeq" id="WP_000686892.1">
    <property type="nucleotide sequence ID" value="NC_011773.1"/>
</dbReference>
<dbReference type="SMR" id="B7JJS7"/>
<dbReference type="GeneID" id="93007271"/>
<dbReference type="KEGG" id="bcu:BCAH820_3854"/>
<dbReference type="HOGENOM" id="CLU_047363_0_1_9"/>
<dbReference type="Proteomes" id="UP000001363">
    <property type="component" value="Chromosome"/>
</dbReference>
<dbReference type="GO" id="GO:0005829">
    <property type="term" value="C:cytosol"/>
    <property type="evidence" value="ECO:0007669"/>
    <property type="project" value="TreeGrafter"/>
</dbReference>
<dbReference type="GO" id="GO:0052906">
    <property type="term" value="F:tRNA (guanine(37)-N1)-methyltransferase activity"/>
    <property type="evidence" value="ECO:0007669"/>
    <property type="project" value="UniProtKB-UniRule"/>
</dbReference>
<dbReference type="GO" id="GO:0002939">
    <property type="term" value="P:tRNA N1-guanine methylation"/>
    <property type="evidence" value="ECO:0007669"/>
    <property type="project" value="TreeGrafter"/>
</dbReference>
<dbReference type="CDD" id="cd18080">
    <property type="entry name" value="TrmD-like"/>
    <property type="match status" value="1"/>
</dbReference>
<dbReference type="FunFam" id="1.10.1270.20:FF:000001">
    <property type="entry name" value="tRNA (guanine-N(1)-)-methyltransferase"/>
    <property type="match status" value="1"/>
</dbReference>
<dbReference type="FunFam" id="3.40.1280.10:FF:000001">
    <property type="entry name" value="tRNA (guanine-N(1)-)-methyltransferase"/>
    <property type="match status" value="1"/>
</dbReference>
<dbReference type="Gene3D" id="3.40.1280.10">
    <property type="match status" value="1"/>
</dbReference>
<dbReference type="Gene3D" id="1.10.1270.20">
    <property type="entry name" value="tRNA(m1g37)methyltransferase, domain 2"/>
    <property type="match status" value="1"/>
</dbReference>
<dbReference type="HAMAP" id="MF_00605">
    <property type="entry name" value="TrmD"/>
    <property type="match status" value="1"/>
</dbReference>
<dbReference type="InterPro" id="IPR029028">
    <property type="entry name" value="Alpha/beta_knot_MTases"/>
</dbReference>
<dbReference type="InterPro" id="IPR023148">
    <property type="entry name" value="tRNA_m1G_MeTrfase_C_sf"/>
</dbReference>
<dbReference type="InterPro" id="IPR002649">
    <property type="entry name" value="tRNA_m1G_MeTrfase_TrmD"/>
</dbReference>
<dbReference type="InterPro" id="IPR029026">
    <property type="entry name" value="tRNA_m1G_MTases_N"/>
</dbReference>
<dbReference type="InterPro" id="IPR016009">
    <property type="entry name" value="tRNA_MeTrfase_TRMD/TRM10"/>
</dbReference>
<dbReference type="NCBIfam" id="NF000648">
    <property type="entry name" value="PRK00026.1"/>
    <property type="match status" value="1"/>
</dbReference>
<dbReference type="NCBIfam" id="TIGR00088">
    <property type="entry name" value="trmD"/>
    <property type="match status" value="1"/>
</dbReference>
<dbReference type="PANTHER" id="PTHR46417">
    <property type="entry name" value="TRNA (GUANINE-N(1)-)-METHYLTRANSFERASE"/>
    <property type="match status" value="1"/>
</dbReference>
<dbReference type="PANTHER" id="PTHR46417:SF1">
    <property type="entry name" value="TRNA (GUANINE-N(1)-)-METHYLTRANSFERASE"/>
    <property type="match status" value="1"/>
</dbReference>
<dbReference type="Pfam" id="PF01746">
    <property type="entry name" value="tRNA_m1G_MT"/>
    <property type="match status" value="1"/>
</dbReference>
<dbReference type="PIRSF" id="PIRSF000386">
    <property type="entry name" value="tRNA_mtase"/>
    <property type="match status" value="1"/>
</dbReference>
<dbReference type="SUPFAM" id="SSF75217">
    <property type="entry name" value="alpha/beta knot"/>
    <property type="match status" value="1"/>
</dbReference>
<protein>
    <recommendedName>
        <fullName evidence="1">tRNA (guanine-N(1)-)-methyltransferase</fullName>
        <ecNumber evidence="1">2.1.1.228</ecNumber>
    </recommendedName>
    <alternativeName>
        <fullName evidence="1">M1G-methyltransferase</fullName>
    </alternativeName>
    <alternativeName>
        <fullName evidence="1">tRNA [GM37] methyltransferase</fullName>
    </alternativeName>
</protein>
<evidence type="ECO:0000255" key="1">
    <source>
        <dbReference type="HAMAP-Rule" id="MF_00605"/>
    </source>
</evidence>
<sequence length="244" mass="27967">MKIDILTLFPDMFTGVFGSSILKKAQEKEAVELRVVNFRDYTTSKHNSVDDYPYGGGAGMVLTPQPIFDAVEDLTKETERKPRVVLMCPQGERFTQKKAEELAEEEHLIFVCGHYEGYDERIREHLVTDEISIGDYVLTGGELASMVITDSVVRLLPGVLGNHASQVEDSFSTGLLEHPHYTRPADFRGMKVPDVLMSGNHKNIDEWRHKESLRRTYTRRPDLLEERELSKQEKKWLEQIKEGK</sequence>
<comment type="function">
    <text evidence="1">Specifically methylates guanosine-37 in various tRNAs.</text>
</comment>
<comment type="catalytic activity">
    <reaction evidence="1">
        <text>guanosine(37) in tRNA + S-adenosyl-L-methionine = N(1)-methylguanosine(37) in tRNA + S-adenosyl-L-homocysteine + H(+)</text>
        <dbReference type="Rhea" id="RHEA:36899"/>
        <dbReference type="Rhea" id="RHEA-COMP:10145"/>
        <dbReference type="Rhea" id="RHEA-COMP:10147"/>
        <dbReference type="ChEBI" id="CHEBI:15378"/>
        <dbReference type="ChEBI" id="CHEBI:57856"/>
        <dbReference type="ChEBI" id="CHEBI:59789"/>
        <dbReference type="ChEBI" id="CHEBI:73542"/>
        <dbReference type="ChEBI" id="CHEBI:74269"/>
        <dbReference type="EC" id="2.1.1.228"/>
    </reaction>
</comment>
<comment type="subunit">
    <text evidence="1">Homodimer.</text>
</comment>
<comment type="subcellular location">
    <subcellularLocation>
        <location evidence="1">Cytoplasm</location>
    </subcellularLocation>
</comment>
<comment type="similarity">
    <text evidence="1">Belongs to the RNA methyltransferase TrmD family.</text>
</comment>
<feature type="chain" id="PRO_1000130131" description="tRNA (guanine-N(1)-)-methyltransferase">
    <location>
        <begin position="1"/>
        <end position="244"/>
    </location>
</feature>
<feature type="binding site" evidence="1">
    <location>
        <position position="113"/>
    </location>
    <ligand>
        <name>S-adenosyl-L-methionine</name>
        <dbReference type="ChEBI" id="CHEBI:59789"/>
    </ligand>
</feature>
<feature type="binding site" evidence="1">
    <location>
        <begin position="133"/>
        <end position="138"/>
    </location>
    <ligand>
        <name>S-adenosyl-L-methionine</name>
        <dbReference type="ChEBI" id="CHEBI:59789"/>
    </ligand>
</feature>